<name>PSTS_PSEAE</name>
<reference key="1">
    <citation type="journal article" date="1999" name="J. Biosci. Bioeng.">
        <title>Cloning and characterization of Pseudomonas putida genes encoding the phosphate-specific transport system.</title>
        <authorList>
            <person name="Wu H."/>
            <person name="Kosaka H."/>
            <person name="Kato J."/>
            <person name="Kuroda A."/>
            <person name="Ikeda T."/>
            <person name="Takiguchi N."/>
            <person name="Ohtake H."/>
        </authorList>
    </citation>
    <scope>NUCLEOTIDE SEQUENCE [GENOMIC DNA]</scope>
    <source>
        <strain>ATCC 15692 / DSM 22644 / CIP 104116 / JCM 14847 / LMG 12228 / 1C / PRS 101 / PAO1</strain>
    </source>
</reference>
<reference key="2">
    <citation type="journal article" date="2000" name="Nature">
        <title>Complete genome sequence of Pseudomonas aeruginosa PAO1, an opportunistic pathogen.</title>
        <authorList>
            <person name="Stover C.K."/>
            <person name="Pham X.-Q.T."/>
            <person name="Erwin A.L."/>
            <person name="Mizoguchi S.D."/>
            <person name="Warrener P."/>
            <person name="Hickey M.J."/>
            <person name="Brinkman F.S.L."/>
            <person name="Hufnagle W.O."/>
            <person name="Kowalik D.J."/>
            <person name="Lagrou M."/>
            <person name="Garber R.L."/>
            <person name="Goltry L."/>
            <person name="Tolentino E."/>
            <person name="Westbrock-Wadman S."/>
            <person name="Yuan Y."/>
            <person name="Brody L.L."/>
            <person name="Coulter S.N."/>
            <person name="Folger K.R."/>
            <person name="Kas A."/>
            <person name="Larbig K."/>
            <person name="Lim R.M."/>
            <person name="Smith K.A."/>
            <person name="Spencer D.H."/>
            <person name="Wong G.K.-S."/>
            <person name="Wu Z."/>
            <person name="Paulsen I.T."/>
            <person name="Reizer J."/>
            <person name="Saier M.H. Jr."/>
            <person name="Hancock R.E.W."/>
            <person name="Lory S."/>
            <person name="Olson M.V."/>
        </authorList>
    </citation>
    <scope>NUCLEOTIDE SEQUENCE [LARGE SCALE GENOMIC DNA]</scope>
    <source>
        <strain>ATCC 15692 / DSM 22644 / CIP 104116 / JCM 14847 / LMG 12228 / 1C / PRS 101 / PAO1</strain>
    </source>
</reference>
<reference key="3">
    <citation type="journal article" date="2003" name="J. Basic Microbiol.">
        <title>Identification of a major protein upon phosphate starvation of Pseudomonas aeruginosa PAO1.</title>
        <authorList>
            <person name="Madhusudhan K.T."/>
            <person name="McLaughlin R."/>
            <person name="Komori N."/>
            <person name="Matsumoto H."/>
        </authorList>
    </citation>
    <scope>PROTEIN SEQUENCE OF 25-34</scope>
    <scope>INDUCTION BY PHOSPHATE STARVATION</scope>
    <source>
        <strain>ATCC 15692 / DSM 22644 / CIP 104116 / JCM 14847 / LMG 12228 / 1C / PRS 101 / PAO1</strain>
    </source>
</reference>
<reference key="4">
    <citation type="journal article" date="2008" name="PLoS Pathog.">
        <title>Structure-function aspects of PstS in multi-drug-resistant Pseudomonas aeruginosa.</title>
        <authorList>
            <person name="Zaborina O."/>
            <person name="Holbrook C."/>
            <person name="Chen Y."/>
            <person name="Long J."/>
            <person name="Zaborin A."/>
            <person name="Morozova I."/>
            <person name="Fernandez H."/>
            <person name="Wang Y."/>
            <person name="Turner J.R."/>
            <person name="Alverdy J.C."/>
        </authorList>
    </citation>
    <scope>FUNCTION IN HOST CELL ADHESION</scope>
    <scope>SUBCELLULAR LOCATION</scope>
    <scope>INDUCTION</scope>
    <scope>DISRUPTION PHENOTYPE</scope>
    <source>
        <strain>ATCC 15692 / DSM 22644 / CIP 104116 / JCM 14847 / LMG 12228 / 1C / PRS 101 / PAO1</strain>
    </source>
</reference>
<reference key="5">
    <citation type="journal article" date="1988" name="FEMS Microbiol. Lett.">
        <title>Gene cloning and expression of the Pseudomonas aeruginosa periplasmic phosphate-binding protein.</title>
        <authorList>
            <person name="Worobec E.A."/>
            <person name="Siehnel R.J."/>
            <person name="Gladman P."/>
            <person name="Hancock R.E."/>
        </authorList>
    </citation>
    <scope>PROTEIN SEQUENCE OF 26-39</scope>
    <scope>FUNCTION IN PHOSPHATE TRANSPORT</scope>
    <scope>SUBCELLULAR LOCATION</scope>
    <scope>DISRUPTION PHENOTYPE</scope>
    <scope>PHOSPHATE-BINDING</scope>
    <source>
        <strain>ATCC 15692 / DSM 22644 / CIP 104116 / JCM 14847 / LMG 12228 / 1C / PRS 101 / PAO1</strain>
    </source>
</reference>
<reference key="6">
    <citation type="journal article" date="1984" name="Eur. J. Biochem.">
        <title>Phosphate transport in Pseudomonas aeruginosa. Involvement of a periplasmic phosphate-binding protein.</title>
        <authorList>
            <person name="Poole K."/>
            <person name="Hancock R.E."/>
        </authorList>
    </citation>
    <scope>FUNCTION</scope>
    <scope>ACTIVITY REGULATION</scope>
    <scope>SUBCELLULAR LOCATION</scope>
    <scope>INDUCTION BY PHOSPHATE STARVATION</scope>
    <scope>DISRUPTION PHENOTYPE</scope>
    <scope>PHOSPHATE-BINDING</scope>
    <source>
        <strain>ATCC 15692 / DSM 22644 / CIP 104116 / JCM 14847 / LMG 12228 / 1C / PRS 101 / PAO1</strain>
    </source>
</reference>
<reference key="7">
    <citation type="journal article" date="2000" name="J. Biosci. Bioeng.">
        <title>Evaluation of phosphate removal from water by immobilized phosphate-binding protein PstS.</title>
        <authorList>
            <person name="Kuroda A."/>
            <person name="Kunimoto H."/>
            <person name="Morohoshi T."/>
            <person name="Ikeda T."/>
            <person name="Kato J."/>
            <person name="Takiguchi N."/>
            <person name="Miya A."/>
            <person name="Ohtake H."/>
        </authorList>
    </citation>
    <scope>BIOTECHNOLOGY</scope>
</reference>
<reference key="8">
    <citation type="journal article" date="2013" name="PLoS ONE">
        <title>The effect of pstS and phoB on quorum sensing and swarming motility in Pseudomonas aeruginosa.</title>
        <authorList>
            <person name="Blus-Kadosh I."/>
            <person name="Zilka A."/>
            <person name="Yerushalmi G."/>
            <person name="Banin E."/>
        </authorList>
    </citation>
    <scope>DISRUPTION PHENOTYPE</scope>
    <source>
        <strain>ATCC 15692 / DSM 22644 / CIP 104116 / JCM 14847 / LMG 12228 / 1C / PRS 101 / PAO1</strain>
    </source>
</reference>
<reference key="9">
    <citation type="journal article" date="2014" name="Acta Crystallogr. F">
        <title>Expression, purification and crystallization of the phosphate-binding PstS protein from Pseudomonas aeruginosa.</title>
        <authorList>
            <person name="Neznansky A."/>
            <person name="Opatowsky Y."/>
        </authorList>
    </citation>
    <scope>PRELIMINARY CRYSTALLIZATION</scope>
</reference>
<protein>
    <recommendedName>
        <fullName>Phosphate-binding protein PstS</fullName>
    </recommendedName>
</protein>
<accession>G3XDA8</accession>
<accession>Q7DC39</accession>
<accession>Q9Z9M3</accession>
<organism>
    <name type="scientific">Pseudomonas aeruginosa (strain ATCC 15692 / DSM 22644 / CIP 104116 / JCM 14847 / LMG 12228 / 1C / PRS 101 / PAO1)</name>
    <dbReference type="NCBI Taxonomy" id="208964"/>
    <lineage>
        <taxon>Bacteria</taxon>
        <taxon>Pseudomonadati</taxon>
        <taxon>Pseudomonadota</taxon>
        <taxon>Gammaproteobacteria</taxon>
        <taxon>Pseudomonadales</taxon>
        <taxon>Pseudomonadaceae</taxon>
        <taxon>Pseudomonas</taxon>
    </lineage>
</organism>
<gene>
    <name type="primary">pstS</name>
    <name type="ordered locus">PA5369</name>
</gene>
<dbReference type="EMBL" id="AB017492">
    <property type="protein sequence ID" value="BAA75661.1"/>
    <property type="molecule type" value="Genomic_DNA"/>
</dbReference>
<dbReference type="EMBL" id="AE004091">
    <property type="protein sequence ID" value="AAG08754.1"/>
    <property type="molecule type" value="Genomic_DNA"/>
</dbReference>
<dbReference type="PIR" id="G82974">
    <property type="entry name" value="G82974"/>
</dbReference>
<dbReference type="RefSeq" id="NP_254056.1">
    <property type="nucleotide sequence ID" value="NC_002516.2"/>
</dbReference>
<dbReference type="RefSeq" id="WP_003096673.1">
    <property type="nucleotide sequence ID" value="NZ_QZGE01000020.1"/>
</dbReference>
<dbReference type="PDB" id="4OMB">
    <property type="method" value="X-ray"/>
    <property type="resolution" value="1.50 A"/>
    <property type="chains" value="A/B/C/D=1-323"/>
</dbReference>
<dbReference type="PDB" id="4PQJ">
    <property type="method" value="X-ray"/>
    <property type="resolution" value="1.86 A"/>
    <property type="chains" value="A/C=25-323"/>
</dbReference>
<dbReference type="PDBsum" id="4OMB"/>
<dbReference type="PDBsum" id="4PQJ"/>
<dbReference type="SMR" id="G3XDA8"/>
<dbReference type="STRING" id="208964.PA5369"/>
<dbReference type="PaxDb" id="208964-PA5369"/>
<dbReference type="DNASU" id="880528"/>
<dbReference type="GeneID" id="880528"/>
<dbReference type="KEGG" id="pae:PA5369"/>
<dbReference type="PATRIC" id="fig|208964.12.peg.5626"/>
<dbReference type="PseudoCAP" id="PA5369"/>
<dbReference type="HOGENOM" id="CLU_026228_6_0_6"/>
<dbReference type="InParanoid" id="G3XDA8"/>
<dbReference type="OrthoDB" id="9765713at2"/>
<dbReference type="PhylomeDB" id="G3XDA8"/>
<dbReference type="BioCyc" id="PAER208964:G1FZ6-5491-MONOMER"/>
<dbReference type="Proteomes" id="UP000002438">
    <property type="component" value="Chromosome"/>
</dbReference>
<dbReference type="GO" id="GO:0005576">
    <property type="term" value="C:extracellular region"/>
    <property type="evidence" value="ECO:0007669"/>
    <property type="project" value="UniProtKB-SubCell"/>
</dbReference>
<dbReference type="GO" id="GO:0042597">
    <property type="term" value="C:periplasmic space"/>
    <property type="evidence" value="ECO:0000314"/>
    <property type="project" value="UniProtKB"/>
</dbReference>
<dbReference type="GO" id="GO:0042301">
    <property type="term" value="F:phosphate ion binding"/>
    <property type="evidence" value="ECO:0000314"/>
    <property type="project" value="UniProtKB"/>
</dbReference>
<dbReference type="GO" id="GO:0007155">
    <property type="term" value="P:cell adhesion"/>
    <property type="evidence" value="ECO:0007669"/>
    <property type="project" value="UniProtKB-KW"/>
</dbReference>
<dbReference type="GO" id="GO:0006817">
    <property type="term" value="P:phosphate ion transport"/>
    <property type="evidence" value="ECO:0000315"/>
    <property type="project" value="UniProtKB"/>
</dbReference>
<dbReference type="GO" id="GO:0044010">
    <property type="term" value="P:single-species biofilm formation"/>
    <property type="evidence" value="ECO:0000315"/>
    <property type="project" value="PseudoCAP"/>
</dbReference>
<dbReference type="CDD" id="cd13566">
    <property type="entry name" value="PBP2_phosphate"/>
    <property type="match status" value="1"/>
</dbReference>
<dbReference type="FunFam" id="3.40.190.10:FF:000151">
    <property type="entry name" value="Phosphate ABC transporter periplasmic phosphate-binding protein"/>
    <property type="match status" value="1"/>
</dbReference>
<dbReference type="Gene3D" id="3.40.190.10">
    <property type="entry name" value="Periplasmic binding protein-like II"/>
    <property type="match status" value="2"/>
</dbReference>
<dbReference type="InterPro" id="IPR024370">
    <property type="entry name" value="PBP_domain"/>
</dbReference>
<dbReference type="InterPro" id="IPR011862">
    <property type="entry name" value="Phos-bd"/>
</dbReference>
<dbReference type="InterPro" id="IPR050811">
    <property type="entry name" value="Phosphate_ABC_transporter"/>
</dbReference>
<dbReference type="NCBIfam" id="TIGR02136">
    <property type="entry name" value="ptsS_2"/>
    <property type="match status" value="1"/>
</dbReference>
<dbReference type="PANTHER" id="PTHR30570">
    <property type="entry name" value="PERIPLASMIC PHOSPHATE BINDING COMPONENT OF PHOSPHATE ABC TRANSPORTER"/>
    <property type="match status" value="1"/>
</dbReference>
<dbReference type="PANTHER" id="PTHR30570:SF6">
    <property type="entry name" value="PHOSPHATE-BINDING PROTEIN PSTS"/>
    <property type="match status" value="1"/>
</dbReference>
<dbReference type="Pfam" id="PF12849">
    <property type="entry name" value="PBP_like_2"/>
    <property type="match status" value="1"/>
</dbReference>
<dbReference type="SUPFAM" id="SSF53850">
    <property type="entry name" value="Periplasmic binding protein-like II"/>
    <property type="match status" value="1"/>
</dbReference>
<sequence length="323" mass="34474">MKLKRLMAALTFVAAGVGAASAVAAIDPALPEYQKASGVSGNLSSVGSDTLANLMTMWAEEYKRLYPNVNIQIQAAGSSTAPPALTEGTANLGPMSRKMKDVELQAFEQKYGYKPTAVPVAVDALAIFVHKDNPIKGLTMQQVDAIFSATRLCGSKQDVKTWGDLGLTGDWAKKPVQLFGRNSVSGTYGYFKEEALCKGDFRPNVNEQPGSASVVQSVSQSLNGIGYSGIGYKTASVKTVALAKKEGAAFVEDNEQNALNGTYPLSRFLYVYVNKAPNKPLDPLEAQFLKLVLSKTGQQVVVKDGYIPLPAKVAEKAIKELGL</sequence>
<evidence type="ECO:0000269" key="1">
    <source>
    </source>
</evidence>
<evidence type="ECO:0000269" key="2">
    <source>
    </source>
</evidence>
<evidence type="ECO:0000269" key="3">
    <source>
    </source>
</evidence>
<evidence type="ECO:0000269" key="4">
    <source>
    </source>
</evidence>
<evidence type="ECO:0000269" key="5">
    <source>
    </source>
</evidence>
<evidence type="ECO:0000269" key="6">
    <source ref="5"/>
</evidence>
<evidence type="ECO:0000305" key="7"/>
<evidence type="ECO:0007829" key="8">
    <source>
        <dbReference type="PDB" id="4OMB"/>
    </source>
</evidence>
<comment type="function">
    <text evidence="3 5">Binds 1 inorganic phosphate per subunit with a KD of 0.34 uM (PubMed:6436026). Required for phosphate transport (Ref.5). In strain PAO1 implicated in host cell adhesion; in some virulent strains (e.g. MDR25 which expresses very high levels of this protein) antibody fragments against this protein decrease host cell adhesion and increase transepithelial resistance of human epithelial cell monolayers. Its ability to bind phosphate may allow it to acquire phosphate from its host (PubMed:18282104).</text>
</comment>
<comment type="activity regulation">
    <text evidence="5">Arsenate, pyrophosphate and polyphosphates up to 15 residues long inhibit phosphate binding, while organic phosphates do not.</text>
</comment>
<comment type="subcellular location">
    <subcellularLocation>
        <location evidence="5 6">Periplasm</location>
    </subcellularLocation>
    <subcellularLocation>
        <location evidence="3">Secreted</location>
    </subcellularLocation>
    <text evidence="3">In some strains (e.g. non-MDR PAO1 and virulent clinical strain MDR25) forms long appendages distinct from flagella or pili on the cell surface: cell surface expression depends on type II secretion effector hxcR (PubMed:18282104).</text>
</comment>
<comment type="induction">
    <text evidence="1 3 5">By phosphate starvation (at protein level) (PubMed:12596240, PubMed:6436026). Different strains have widely differing amounts of protein that can be sheared from the cell surface, in order of decreasing quantities MDR25 &gt;&gt; MDR1 &gt; PAO1 &gt; MDR13 (PubMed:18282104).</text>
</comment>
<comment type="disruption phenotype">
    <text evidence="3 4 5 6">Decreased phosphate transport (PubMed:6436026, Ref.5). In PAO1, decreased ability to adhere to and disrupt a layer of human epithelial cells (PubMed:18282104). Hyper-swarming in the presence and absence of phosphate; hyper-swarming is usually seen during phosphate-depleted growth. Increased induction of alkaline phosphatase in the presence and absence of phosphate. Double phoB-pstS deletions act like phoB deletions (PubMed:24023943).</text>
</comment>
<comment type="biotechnology">
    <text evidence="2">Can be used to remove inorganic phosphate from water, which could be used to control growth of microorganisms.</text>
</comment>
<comment type="similarity">
    <text evidence="7">Belongs to the PstS family.</text>
</comment>
<keyword id="KW-0002">3D-structure</keyword>
<keyword id="KW-0130">Cell adhesion</keyword>
<keyword id="KW-0903">Direct protein sequencing</keyword>
<keyword id="KW-0574">Periplasm</keyword>
<keyword id="KW-0592">Phosphate transport</keyword>
<keyword id="KW-1185">Reference proteome</keyword>
<keyword id="KW-0964">Secreted</keyword>
<keyword id="KW-0732">Signal</keyword>
<keyword id="KW-0813">Transport</keyword>
<keyword id="KW-0843">Virulence</keyword>
<feature type="signal peptide" evidence="1">
    <location>
        <begin position="1"/>
        <end position="24"/>
    </location>
</feature>
<feature type="chain" id="PRO_0000431613" description="Phosphate-binding protein PstS">
    <location>
        <begin position="25"/>
        <end position="323"/>
    </location>
</feature>
<feature type="strand" evidence="8">
    <location>
        <begin position="41"/>
        <end position="46"/>
    </location>
</feature>
<feature type="helix" evidence="8">
    <location>
        <begin position="52"/>
        <end position="65"/>
    </location>
</feature>
<feature type="strand" evidence="8">
    <location>
        <begin position="69"/>
        <end position="74"/>
    </location>
</feature>
<feature type="helix" evidence="8">
    <location>
        <begin position="78"/>
        <end position="80"/>
    </location>
</feature>
<feature type="helix" evidence="8">
    <location>
        <begin position="81"/>
        <end position="86"/>
    </location>
</feature>
<feature type="strand" evidence="8">
    <location>
        <begin position="91"/>
        <end position="97"/>
    </location>
</feature>
<feature type="helix" evidence="8">
    <location>
        <begin position="101"/>
        <end position="111"/>
    </location>
</feature>
<feature type="strand" evidence="8">
    <location>
        <begin position="116"/>
        <end position="124"/>
    </location>
</feature>
<feature type="strand" evidence="8">
    <location>
        <begin position="126"/>
        <end position="130"/>
    </location>
</feature>
<feature type="strand" evidence="8">
    <location>
        <begin position="137"/>
        <end position="139"/>
    </location>
</feature>
<feature type="helix" evidence="8">
    <location>
        <begin position="140"/>
        <end position="147"/>
    </location>
</feature>
<feature type="strand" evidence="8">
    <location>
        <begin position="148"/>
        <end position="150"/>
    </location>
</feature>
<feature type="helix" evidence="8">
    <location>
        <begin position="162"/>
        <end position="165"/>
    </location>
</feature>
<feature type="helix" evidence="8">
    <location>
        <begin position="169"/>
        <end position="171"/>
    </location>
</feature>
<feature type="strand" evidence="8">
    <location>
        <begin position="177"/>
        <end position="180"/>
    </location>
</feature>
<feature type="helix" evidence="8">
    <location>
        <begin position="186"/>
        <end position="194"/>
    </location>
</feature>
<feature type="helix" evidence="8">
    <location>
        <begin position="211"/>
        <end position="219"/>
    </location>
</feature>
<feature type="strand" evidence="8">
    <location>
        <begin position="224"/>
        <end position="228"/>
    </location>
</feature>
<feature type="helix" evidence="8">
    <location>
        <begin position="230"/>
        <end position="232"/>
    </location>
</feature>
<feature type="strand" evidence="8">
    <location>
        <begin position="237"/>
        <end position="239"/>
    </location>
</feature>
<feature type="strand" evidence="8">
    <location>
        <begin position="241"/>
        <end position="245"/>
    </location>
</feature>
<feature type="helix" evidence="8">
    <location>
        <begin position="255"/>
        <end position="259"/>
    </location>
</feature>
<feature type="strand" evidence="8">
    <location>
        <begin position="266"/>
        <end position="273"/>
    </location>
</feature>
<feature type="helix" evidence="8">
    <location>
        <begin position="283"/>
        <end position="292"/>
    </location>
</feature>
<feature type="helix" evidence="8">
    <location>
        <begin position="295"/>
        <end position="304"/>
    </location>
</feature>
<feature type="helix" evidence="8">
    <location>
        <begin position="311"/>
        <end position="321"/>
    </location>
</feature>
<proteinExistence type="evidence at protein level"/>